<dbReference type="EC" id="3.4.11.9"/>
<dbReference type="EMBL" id="ACYE01000137">
    <property type="protein sequence ID" value="EFE42609.1"/>
    <property type="molecule type" value="Genomic_DNA"/>
</dbReference>
<dbReference type="RefSeq" id="XP_003023227.1">
    <property type="nucleotide sequence ID" value="XM_003023181.1"/>
</dbReference>
<dbReference type="SMR" id="D4D6B8"/>
<dbReference type="GeneID" id="9583246"/>
<dbReference type="KEGG" id="tve:TRV_02643"/>
<dbReference type="HOGENOM" id="CLU_017266_1_2_1"/>
<dbReference type="OrthoDB" id="1731at34384"/>
<dbReference type="Proteomes" id="UP000008383">
    <property type="component" value="Unassembled WGS sequence"/>
</dbReference>
<dbReference type="GO" id="GO:0030145">
    <property type="term" value="F:manganese ion binding"/>
    <property type="evidence" value="ECO:0007669"/>
    <property type="project" value="InterPro"/>
</dbReference>
<dbReference type="GO" id="GO:0070006">
    <property type="term" value="F:metalloaminopeptidase activity"/>
    <property type="evidence" value="ECO:0007669"/>
    <property type="project" value="InterPro"/>
</dbReference>
<dbReference type="GO" id="GO:0006508">
    <property type="term" value="P:proteolysis"/>
    <property type="evidence" value="ECO:0007669"/>
    <property type="project" value="UniProtKB-KW"/>
</dbReference>
<dbReference type="Gene3D" id="3.90.230.10">
    <property type="entry name" value="Creatinase/methionine aminopeptidase superfamily"/>
    <property type="match status" value="1"/>
</dbReference>
<dbReference type="Gene3D" id="3.40.350.10">
    <property type="entry name" value="Creatinase/prolidase N-terminal domain"/>
    <property type="match status" value="1"/>
</dbReference>
<dbReference type="InterPro" id="IPR007865">
    <property type="entry name" value="Aminopep_P_N"/>
</dbReference>
<dbReference type="InterPro" id="IPR029149">
    <property type="entry name" value="Creatin/AminoP/Spt16_N"/>
</dbReference>
<dbReference type="InterPro" id="IPR036005">
    <property type="entry name" value="Creatinase/aminopeptidase-like"/>
</dbReference>
<dbReference type="InterPro" id="IPR000994">
    <property type="entry name" value="Pept_M24"/>
</dbReference>
<dbReference type="InterPro" id="IPR001131">
    <property type="entry name" value="Peptidase_M24B_aminopep-P_CS"/>
</dbReference>
<dbReference type="InterPro" id="IPR052433">
    <property type="entry name" value="X-Pro_dipept-like"/>
</dbReference>
<dbReference type="PANTHER" id="PTHR43226">
    <property type="entry name" value="XAA-PRO AMINOPEPTIDASE 3"/>
    <property type="match status" value="1"/>
</dbReference>
<dbReference type="PANTHER" id="PTHR43226:SF3">
    <property type="entry name" value="XAA-PRO AMINOPEPTIDASE AN0832-RELATED"/>
    <property type="match status" value="1"/>
</dbReference>
<dbReference type="Pfam" id="PF05195">
    <property type="entry name" value="AMP_N"/>
    <property type="match status" value="1"/>
</dbReference>
<dbReference type="Pfam" id="PF00557">
    <property type="entry name" value="Peptidase_M24"/>
    <property type="match status" value="1"/>
</dbReference>
<dbReference type="SMART" id="SM01011">
    <property type="entry name" value="AMP_N"/>
    <property type="match status" value="1"/>
</dbReference>
<dbReference type="SUPFAM" id="SSF55920">
    <property type="entry name" value="Creatinase/aminopeptidase"/>
    <property type="match status" value="1"/>
</dbReference>
<dbReference type="SUPFAM" id="SSF53092">
    <property type="entry name" value="Creatinase/prolidase N-terminal domain"/>
    <property type="match status" value="1"/>
</dbReference>
<dbReference type="PROSITE" id="PS00491">
    <property type="entry name" value="PROLINE_PEPTIDASE"/>
    <property type="match status" value="1"/>
</dbReference>
<keyword id="KW-0031">Aminopeptidase</keyword>
<keyword id="KW-0378">Hydrolase</keyword>
<keyword id="KW-0464">Manganese</keyword>
<keyword id="KW-0479">Metal-binding</keyword>
<keyword id="KW-0482">Metalloprotease</keyword>
<keyword id="KW-0645">Protease</keyword>
<gene>
    <name type="ORF">TRV_02643</name>
</gene>
<comment type="function">
    <text evidence="1">Catalyzes the removal of a penultimate prolyl residue from the N-termini of peptides.</text>
</comment>
<comment type="catalytic activity">
    <reaction>
        <text>Release of any N-terminal amino acid, including proline, that is linked to proline, even from a dipeptide or tripeptide.</text>
        <dbReference type="EC" id="3.4.11.9"/>
    </reaction>
</comment>
<comment type="cofactor">
    <cofactor evidence="1">
        <name>Mn(2+)</name>
        <dbReference type="ChEBI" id="CHEBI:29035"/>
    </cofactor>
    <text evidence="1">Binds 2 manganese ions per subunit.</text>
</comment>
<comment type="similarity">
    <text evidence="2">Belongs to the peptidase M24B family.</text>
</comment>
<accession>D4D6B8</accession>
<proteinExistence type="inferred from homology"/>
<name>AMPP2_TRIVH</name>
<organism>
    <name type="scientific">Trichophyton verrucosum (strain HKI 0517)</name>
    <dbReference type="NCBI Taxonomy" id="663202"/>
    <lineage>
        <taxon>Eukaryota</taxon>
        <taxon>Fungi</taxon>
        <taxon>Dikarya</taxon>
        <taxon>Ascomycota</taxon>
        <taxon>Pezizomycotina</taxon>
        <taxon>Eurotiomycetes</taxon>
        <taxon>Eurotiomycetidae</taxon>
        <taxon>Onygenales</taxon>
        <taxon>Arthrodermataceae</taxon>
        <taxon>Trichophyton</taxon>
    </lineage>
</organism>
<evidence type="ECO:0000250" key="1"/>
<evidence type="ECO:0000305" key="2"/>
<feature type="chain" id="PRO_0000411854" description="Probable Xaa-Pro aminopeptidase TRV_02643">
    <location>
        <begin position="1"/>
        <end position="507"/>
    </location>
</feature>
<feature type="binding site" evidence="1">
    <location>
        <position position="275"/>
    </location>
    <ligand>
        <name>Mn(2+)</name>
        <dbReference type="ChEBI" id="CHEBI:29035"/>
        <label>2</label>
    </ligand>
</feature>
<feature type="binding site" evidence="1">
    <location>
        <position position="286"/>
    </location>
    <ligand>
        <name>Mn(2+)</name>
        <dbReference type="ChEBI" id="CHEBI:29035"/>
        <label>1</label>
    </ligand>
</feature>
<feature type="binding site" evidence="1">
    <location>
        <position position="286"/>
    </location>
    <ligand>
        <name>Mn(2+)</name>
        <dbReference type="ChEBI" id="CHEBI:29035"/>
        <label>2</label>
    </ligand>
</feature>
<feature type="binding site" evidence="1">
    <location>
        <position position="434"/>
    </location>
    <ligand>
        <name>Mn(2+)</name>
        <dbReference type="ChEBI" id="CHEBI:29035"/>
        <label>1</label>
    </ligand>
</feature>
<feature type="binding site" evidence="1">
    <location>
        <position position="478"/>
    </location>
    <ligand>
        <name>Mn(2+)</name>
        <dbReference type="ChEBI" id="CHEBI:29035"/>
        <label>1</label>
    </ligand>
</feature>
<feature type="binding site" evidence="1">
    <location>
        <position position="478"/>
    </location>
    <ligand>
        <name>Mn(2+)</name>
        <dbReference type="ChEBI" id="CHEBI:29035"/>
        <label>2</label>
    </ligand>
</feature>
<reference key="1">
    <citation type="journal article" date="2011" name="Genome Biol.">
        <title>Comparative and functional genomics provide insights into the pathogenicity of dermatophytic fungi.</title>
        <authorList>
            <person name="Burmester A."/>
            <person name="Shelest E."/>
            <person name="Gloeckner G."/>
            <person name="Heddergott C."/>
            <person name="Schindler S."/>
            <person name="Staib P."/>
            <person name="Heidel A."/>
            <person name="Felder M."/>
            <person name="Petzold A."/>
            <person name="Szafranski K."/>
            <person name="Feuermann M."/>
            <person name="Pedruzzi I."/>
            <person name="Priebe S."/>
            <person name="Groth M."/>
            <person name="Winkler R."/>
            <person name="Li W."/>
            <person name="Kniemeyer O."/>
            <person name="Schroeckh V."/>
            <person name="Hertweck C."/>
            <person name="Hube B."/>
            <person name="White T.C."/>
            <person name="Platzer M."/>
            <person name="Guthke R."/>
            <person name="Heitman J."/>
            <person name="Woestemeyer J."/>
            <person name="Zipfel P.F."/>
            <person name="Monod M."/>
            <person name="Brakhage A.A."/>
        </authorList>
    </citation>
    <scope>NUCLEOTIDE SEQUENCE [LARGE SCALE GENOMIC DNA]</scope>
    <source>
        <strain>HKI 0517</strain>
    </source>
</reference>
<protein>
    <recommendedName>
        <fullName>Probable Xaa-Pro aminopeptidase TRV_02643</fullName>
        <ecNumber>3.4.11.9</ecNumber>
    </recommendedName>
    <alternativeName>
        <fullName>Aminoacylproline aminopeptidase</fullName>
    </alternativeName>
    <alternativeName>
        <fullName>Prolidase</fullName>
    </alternativeName>
</protein>
<sequence length="507" mass="56310">MASYSVTVSVAGTSINKYPAGSAGFDLAMADSYDPGKQHARRVAAYLPKQQGLIYLPGQQTVLSEDSDQDRPFKQRRYFFYVTGVVEPDCHVTYDIAEDKLTLYVPDFDFKRTIWTGPTLGKDEANQRYDVDRVEYFSALEGDVLRWSQANPSLSIYILHPDQRPVTPLTVAYFYESKSLKHAMDACRVIKDEHEIQLIQRANRVSGAAHRSILANLHHFKNEAQIAGLFIDVCLSLRSKGTAYQTIAGSGSNGATLHYTRNNEPLAGRQMVVLDAGAEWSCYASDVTRSFPIPSSVSGGRDWPSREAEQIYAIVQRMQEECISRVKEGALFFSIHQHAHAIALEELLKLGILRIPQGSTKADLIKAEVTALFFPHGLGHHLGLEVHDVSPDSGTIPVELAIEREKGLMSVTEHRPPCTLSAPPLASGMVITVEPGLYFNRLAIDQARAERDEPNSKGRFVNFDVVERYVDVGGVRIEDDVLVTKDGNKNLTDAPKGKEMLDLIYGR</sequence>